<feature type="transit peptide" description="Chloroplast" evidence="1">
    <location>
        <begin position="1"/>
        <end position="35"/>
    </location>
</feature>
<feature type="chain" id="PRO_0000441904" description="Pentatricopeptide repeat-containing protein ATP4, chloroplastic">
    <location>
        <begin position="36"/>
        <end position="691"/>
    </location>
</feature>
<feature type="repeat" description="PPR 1" evidence="3">
    <location>
        <begin position="163"/>
        <end position="197"/>
    </location>
</feature>
<feature type="repeat" description="PPR 2" evidence="3">
    <location>
        <begin position="198"/>
        <end position="232"/>
    </location>
</feature>
<feature type="repeat" description="PPR 3" evidence="3">
    <location>
        <begin position="233"/>
        <end position="267"/>
    </location>
</feature>
<feature type="repeat" description="PPR 4" evidence="3">
    <location>
        <begin position="268"/>
        <end position="302"/>
    </location>
</feature>
<feature type="repeat" description="PPR 5" evidence="3">
    <location>
        <begin position="303"/>
        <end position="337"/>
    </location>
</feature>
<feature type="repeat" description="PPR 6" evidence="3">
    <location>
        <begin position="338"/>
        <end position="372"/>
    </location>
</feature>
<feature type="repeat" description="PPR 7" evidence="3">
    <location>
        <begin position="373"/>
        <end position="403"/>
    </location>
</feature>
<feature type="repeat" description="PPR 8" evidence="3">
    <location>
        <begin position="411"/>
        <end position="445"/>
    </location>
</feature>
<feature type="repeat" description="PPR 9" evidence="3">
    <location>
        <begin position="446"/>
        <end position="480"/>
    </location>
</feature>
<feature type="repeat" description="PPR 10" evidence="3">
    <location>
        <begin position="546"/>
        <end position="580"/>
    </location>
</feature>
<feature type="domain" description="Smr" evidence="2">
    <location>
        <begin position="592"/>
        <end position="677"/>
    </location>
</feature>
<feature type="region of interest" description="Disordered" evidence="4">
    <location>
        <begin position="1"/>
        <end position="76"/>
    </location>
</feature>
<feature type="compositionally biased region" description="Low complexity" evidence="4">
    <location>
        <begin position="1"/>
        <end position="17"/>
    </location>
</feature>
<feature type="compositionally biased region" description="Polar residues" evidence="4">
    <location>
        <begin position="24"/>
        <end position="33"/>
    </location>
</feature>
<feature type="compositionally biased region" description="Pro residues" evidence="4">
    <location>
        <begin position="45"/>
        <end position="56"/>
    </location>
</feature>
<feature type="compositionally biased region" description="Polar residues" evidence="4">
    <location>
        <begin position="61"/>
        <end position="76"/>
    </location>
</feature>
<protein>
    <recommendedName>
        <fullName evidence="8">Pentatricopeptide repeat-containing protein ATP4, chloroplastic</fullName>
    </recommendedName>
    <alternativeName>
        <fullName evidence="7">ATP synthase 4</fullName>
    </alternativeName>
</protein>
<name>ATP4_MAIZE</name>
<reference key="1">
    <citation type="journal article" date="2009" name="Science">
        <title>The B73 maize genome: complexity, diversity, and dynamics.</title>
        <authorList>
            <person name="Schnable P.S."/>
            <person name="Ware D."/>
            <person name="Fulton R.S."/>
            <person name="Stein J.C."/>
            <person name="Wei F."/>
            <person name="Pasternak S."/>
            <person name="Liang C."/>
            <person name="Zhang J."/>
            <person name="Fulton L."/>
            <person name="Graves T.A."/>
            <person name="Minx P."/>
            <person name="Reily A.D."/>
            <person name="Courtney L."/>
            <person name="Kruchowski S.S."/>
            <person name="Tomlinson C."/>
            <person name="Strong C."/>
            <person name="Delehaunty K."/>
            <person name="Fronick C."/>
            <person name="Courtney B."/>
            <person name="Rock S.M."/>
            <person name="Belter E."/>
            <person name="Du F."/>
            <person name="Kim K."/>
            <person name="Abbott R.M."/>
            <person name="Cotton M."/>
            <person name="Levy A."/>
            <person name="Marchetto P."/>
            <person name="Ochoa K."/>
            <person name="Jackson S.M."/>
            <person name="Gillam B."/>
            <person name="Chen W."/>
            <person name="Yan L."/>
            <person name="Higginbotham J."/>
            <person name="Cardenas M."/>
            <person name="Waligorski J."/>
            <person name="Applebaum E."/>
            <person name="Phelps L."/>
            <person name="Falcone J."/>
            <person name="Kanchi K."/>
            <person name="Thane T."/>
            <person name="Scimone A."/>
            <person name="Thane N."/>
            <person name="Henke J."/>
            <person name="Wang T."/>
            <person name="Ruppert J."/>
            <person name="Shah N."/>
            <person name="Rotter K."/>
            <person name="Hodges J."/>
            <person name="Ingenthron E."/>
            <person name="Cordes M."/>
            <person name="Kohlberg S."/>
            <person name="Sgro J."/>
            <person name="Delgado B."/>
            <person name="Mead K."/>
            <person name="Chinwalla A."/>
            <person name="Leonard S."/>
            <person name="Crouse K."/>
            <person name="Collura K."/>
            <person name="Kudrna D."/>
            <person name="Currie J."/>
            <person name="He R."/>
            <person name="Angelova A."/>
            <person name="Rajasekar S."/>
            <person name="Mueller T."/>
            <person name="Lomeli R."/>
            <person name="Scara G."/>
            <person name="Ko A."/>
            <person name="Delaney K."/>
            <person name="Wissotski M."/>
            <person name="Lopez G."/>
            <person name="Campos D."/>
            <person name="Braidotti M."/>
            <person name="Ashley E."/>
            <person name="Golser W."/>
            <person name="Kim H."/>
            <person name="Lee S."/>
            <person name="Lin J."/>
            <person name="Dujmic Z."/>
            <person name="Kim W."/>
            <person name="Talag J."/>
            <person name="Zuccolo A."/>
            <person name="Fan C."/>
            <person name="Sebastian A."/>
            <person name="Kramer M."/>
            <person name="Spiegel L."/>
            <person name="Nascimento L."/>
            <person name="Zutavern T."/>
            <person name="Miller B."/>
            <person name="Ambroise C."/>
            <person name="Muller S."/>
            <person name="Spooner W."/>
            <person name="Narechania A."/>
            <person name="Ren L."/>
            <person name="Wei S."/>
            <person name="Kumari S."/>
            <person name="Faga B."/>
            <person name="Levy M.J."/>
            <person name="McMahan L."/>
            <person name="Van Buren P."/>
            <person name="Vaughn M.W."/>
            <person name="Ying K."/>
            <person name="Yeh C.-T."/>
            <person name="Emrich S.J."/>
            <person name="Jia Y."/>
            <person name="Kalyanaraman A."/>
            <person name="Hsia A.-P."/>
            <person name="Barbazuk W.B."/>
            <person name="Baucom R.S."/>
            <person name="Brutnell T.P."/>
            <person name="Carpita N.C."/>
            <person name="Chaparro C."/>
            <person name="Chia J.-M."/>
            <person name="Deragon J.-M."/>
            <person name="Estill J.C."/>
            <person name="Fu Y."/>
            <person name="Jeddeloh J.A."/>
            <person name="Han Y."/>
            <person name="Lee H."/>
            <person name="Li P."/>
            <person name="Lisch D.R."/>
            <person name="Liu S."/>
            <person name="Liu Z."/>
            <person name="Nagel D.H."/>
            <person name="McCann M.C."/>
            <person name="SanMiguel P."/>
            <person name="Myers A.M."/>
            <person name="Nettleton D."/>
            <person name="Nguyen J."/>
            <person name="Penning B.W."/>
            <person name="Ponnala L."/>
            <person name="Schneider K.L."/>
            <person name="Schwartz D.C."/>
            <person name="Sharma A."/>
            <person name="Soderlund C."/>
            <person name="Springer N.M."/>
            <person name="Sun Q."/>
            <person name="Wang H."/>
            <person name="Waterman M."/>
            <person name="Westerman R."/>
            <person name="Wolfgruber T.K."/>
            <person name="Yang L."/>
            <person name="Yu Y."/>
            <person name="Zhang L."/>
            <person name="Zhou S."/>
            <person name="Zhu Q."/>
            <person name="Bennetzen J.L."/>
            <person name="Dawe R.K."/>
            <person name="Jiang J."/>
            <person name="Jiang N."/>
            <person name="Presting G.G."/>
            <person name="Wessler S.R."/>
            <person name="Aluru S."/>
            <person name="Martienssen R.A."/>
            <person name="Clifton S.W."/>
            <person name="McCombie W.R."/>
            <person name="Wing R.A."/>
            <person name="Wilson R.K."/>
        </authorList>
    </citation>
    <scope>NUCLEOTIDE SEQUENCE [LARGE SCALE GENOMIC DNA]</scope>
    <source>
        <strain>cv. B73</strain>
    </source>
</reference>
<reference key="2">
    <citation type="journal article" date="2009" name="PLoS Genet.">
        <title>Sequencing, mapping, and analysis of 27,455 maize full-length cDNAs.</title>
        <authorList>
            <person name="Soderlund C."/>
            <person name="Descour A."/>
            <person name="Kudrna D."/>
            <person name="Bomhoff M."/>
            <person name="Boyd L."/>
            <person name="Currie J."/>
            <person name="Angelova A."/>
            <person name="Collura K."/>
            <person name="Wissotski M."/>
            <person name="Ashley E."/>
            <person name="Morrow D."/>
            <person name="Fernandes J."/>
            <person name="Walbot V."/>
            <person name="Yu Y."/>
        </authorList>
    </citation>
    <scope>NUCLEOTIDE SEQUENCE [LARGE SCALE MRNA]</scope>
    <source>
        <strain>cv. B73</strain>
    </source>
</reference>
<reference key="3">
    <citation type="journal article" date="2012" name="Plant J.">
        <title>The pentatricopeptide repeat-SMR protein ATP4 promotes translation of the chloroplast atpB/E mRNA.</title>
        <authorList>
            <person name="Zoschke R."/>
            <person name="Kroeger T."/>
            <person name="Belcher S."/>
            <person name="Schoettler M.A."/>
            <person name="Barkan A."/>
            <person name="Schmitz-Linneweber C."/>
        </authorList>
    </citation>
    <scope>FUNCTION</scope>
    <scope>SUBCELLULAR LOCATION</scope>
    <scope>DISRUPTION PHENOTYPE</scope>
</reference>
<reference key="4">
    <citation type="journal article" date="2013" name="Plant Cell">
        <title>A rapid ribosome profiling method elucidates chloroplast ribosome behavior in vivo.</title>
        <authorList>
            <person name="Zoschke R."/>
            <person name="Watkins K.P."/>
            <person name="Barkan A."/>
        </authorList>
    </citation>
    <scope>FUNCTION</scope>
</reference>
<evidence type="ECO:0000255" key="1"/>
<evidence type="ECO:0000255" key="2">
    <source>
        <dbReference type="PROSITE-ProRule" id="PRU00321"/>
    </source>
</evidence>
<evidence type="ECO:0000255" key="3">
    <source>
        <dbReference type="PROSITE-ProRule" id="PRU00708"/>
    </source>
</evidence>
<evidence type="ECO:0000256" key="4">
    <source>
        <dbReference type="SAM" id="MobiDB-lite"/>
    </source>
</evidence>
<evidence type="ECO:0000269" key="5">
    <source>
    </source>
</evidence>
<evidence type="ECO:0000269" key="6">
    <source>
    </source>
</evidence>
<evidence type="ECO:0000303" key="7">
    <source>
    </source>
</evidence>
<evidence type="ECO:0000305" key="8"/>
<evidence type="ECO:0000312" key="9">
    <source>
        <dbReference type="EMBL" id="ONL95104.1"/>
    </source>
</evidence>
<dbReference type="EMBL" id="CM007647">
    <property type="protein sequence ID" value="ONL95104.1"/>
    <property type="molecule type" value="Genomic_DNA"/>
</dbReference>
<dbReference type="EMBL" id="BT033579">
    <property type="protein sequence ID" value="ACF78584.1"/>
    <property type="molecule type" value="mRNA"/>
</dbReference>
<dbReference type="RefSeq" id="NP_001130387.1">
    <property type="nucleotide sequence ID" value="NM_001136915.1"/>
</dbReference>
<dbReference type="SMR" id="B4F8Z1"/>
<dbReference type="FunCoup" id="B4F8Z1">
    <property type="interactions" value="2677"/>
</dbReference>
<dbReference type="STRING" id="4577.B4F8Z1"/>
<dbReference type="PaxDb" id="4577-GRMZM2G128665_P01"/>
<dbReference type="EnsemblPlants" id="Zm00001eb008730_T001">
    <property type="protein sequence ID" value="Zm00001eb008730_P001"/>
    <property type="gene ID" value="Zm00001eb008730"/>
</dbReference>
<dbReference type="GeneID" id="100191483"/>
<dbReference type="Gramene" id="Zm00001eb008730_T001">
    <property type="protein sequence ID" value="Zm00001eb008730_P001"/>
    <property type="gene ID" value="Zm00001eb008730"/>
</dbReference>
<dbReference type="KEGG" id="zma:100191483"/>
<dbReference type="eggNOG" id="KOG4197">
    <property type="taxonomic scope" value="Eukaryota"/>
</dbReference>
<dbReference type="HOGENOM" id="CLU_018319_0_0_1"/>
<dbReference type="InParanoid" id="B4F8Z1"/>
<dbReference type="OMA" id="RPWQAKK"/>
<dbReference type="OrthoDB" id="185373at2759"/>
<dbReference type="Proteomes" id="UP000007305">
    <property type="component" value="Chromosome 1"/>
</dbReference>
<dbReference type="ExpressionAtlas" id="B4F8Z1">
    <property type="expression patterns" value="baseline and differential"/>
</dbReference>
<dbReference type="GO" id="GO:0009570">
    <property type="term" value="C:chloroplast stroma"/>
    <property type="evidence" value="ECO:0000314"/>
    <property type="project" value="UniProtKB"/>
</dbReference>
<dbReference type="GO" id="GO:0003729">
    <property type="term" value="F:mRNA binding"/>
    <property type="evidence" value="ECO:0000314"/>
    <property type="project" value="UniProtKB"/>
</dbReference>
<dbReference type="GO" id="GO:0042134">
    <property type="term" value="F:rRNA primary transcript binding"/>
    <property type="evidence" value="ECO:0000318"/>
    <property type="project" value="GO_Central"/>
</dbReference>
<dbReference type="GO" id="GO:0006397">
    <property type="term" value="P:mRNA processing"/>
    <property type="evidence" value="ECO:0007669"/>
    <property type="project" value="UniProtKB-KW"/>
</dbReference>
<dbReference type="GO" id="GO:0045727">
    <property type="term" value="P:positive regulation of translation"/>
    <property type="evidence" value="ECO:0000315"/>
    <property type="project" value="UniProtKB"/>
</dbReference>
<dbReference type="FunFam" id="1.25.40.10:FF:000509">
    <property type="entry name" value="Pentatricopeptide repeat-containing protein At4g16390, chloroplastic"/>
    <property type="match status" value="1"/>
</dbReference>
<dbReference type="FunFam" id="1.25.40.10:FF:001363">
    <property type="entry name" value="Pentatricopeptide repeat-containing protein ATP4 homolog, chloroplastic"/>
    <property type="match status" value="1"/>
</dbReference>
<dbReference type="FunFam" id="1.25.40.10:FF:001282">
    <property type="entry name" value="Pentatricopeptide repeat-containing protein ATP4, chloroplastic"/>
    <property type="match status" value="1"/>
</dbReference>
<dbReference type="Gene3D" id="1.25.40.10">
    <property type="entry name" value="Tetratricopeptide repeat domain"/>
    <property type="match status" value="3"/>
</dbReference>
<dbReference type="InterPro" id="IPR002885">
    <property type="entry name" value="Pentatricopeptide_rpt"/>
</dbReference>
<dbReference type="InterPro" id="IPR033443">
    <property type="entry name" value="PROP1-like_PPR_dom"/>
</dbReference>
<dbReference type="InterPro" id="IPR002625">
    <property type="entry name" value="Smr_dom"/>
</dbReference>
<dbReference type="InterPro" id="IPR011990">
    <property type="entry name" value="TPR-like_helical_dom_sf"/>
</dbReference>
<dbReference type="NCBIfam" id="TIGR00756">
    <property type="entry name" value="PPR"/>
    <property type="match status" value="8"/>
</dbReference>
<dbReference type="PANTHER" id="PTHR47447">
    <property type="entry name" value="OS03G0856100 PROTEIN"/>
    <property type="match status" value="1"/>
</dbReference>
<dbReference type="PANTHER" id="PTHR47447:SF12">
    <property type="entry name" value="PENTATRICOPEPTIDE REPEAT-CONTAINING PROTEIN ATP4 HOMOLOG, CHLOROPLASTIC"/>
    <property type="match status" value="1"/>
</dbReference>
<dbReference type="Pfam" id="PF01535">
    <property type="entry name" value="PPR"/>
    <property type="match status" value="1"/>
</dbReference>
<dbReference type="Pfam" id="PF13041">
    <property type="entry name" value="PPR_2"/>
    <property type="match status" value="2"/>
</dbReference>
<dbReference type="Pfam" id="PF17177">
    <property type="entry name" value="PPR_long"/>
    <property type="match status" value="1"/>
</dbReference>
<dbReference type="SMART" id="SM00463">
    <property type="entry name" value="SMR"/>
    <property type="match status" value="1"/>
</dbReference>
<dbReference type="PROSITE" id="PS51375">
    <property type="entry name" value="PPR"/>
    <property type="match status" value="10"/>
</dbReference>
<dbReference type="PROSITE" id="PS50828">
    <property type="entry name" value="SMR"/>
    <property type="match status" value="1"/>
</dbReference>
<keyword id="KW-0150">Chloroplast</keyword>
<keyword id="KW-0507">mRNA processing</keyword>
<keyword id="KW-0934">Plastid</keyword>
<keyword id="KW-1185">Reference proteome</keyword>
<keyword id="KW-0677">Repeat</keyword>
<keyword id="KW-0694">RNA-binding</keyword>
<keyword id="KW-0809">Transit peptide</keyword>
<keyword id="KW-0810">Translation regulation</keyword>
<gene>
    <name evidence="7" type="primary">ATP4</name>
    <name evidence="9" type="ORF">ZEAMMB73_Zm00001d028221</name>
</gene>
<sequence length="691" mass="75581">MASLPLCRSPSSLLPSWPHRPISASFNPKNPSSPVAAHVSVQETPPQPQDPSPPSDSNPNGTRPSSSSNTRFLWVNPNSPRAADVARARAGSGRRARLASAAAALGACETTESAVEAALQAAFPEPPSEQDAVIVLNTAAATRAETAVLALRWFLGNAKVRKKVILYNVVLKLLRKKRLWSETEALWAEMLRDGVQPDNATFSTVISCARACGLHSKAVEWFDKMPEFGCSPDMLTYSAVIDAYGHAGNSEAALRLYDRARAEKWQLDPVICSTVIKVHSTSGNFDGALNVFEEMKAIGVRPNLVVYNTMLDAMGRALRPWVVKTIHREMVDQQVQPSRATYCCLLHAYTRARYGEDAMAVYRLMKDEAMGIDVMLYNMLLSMCADIGYVDEAEEIFRDMKASMGAHSKPDSWSYSSMVTLYSSTANVLSAEGILNEMVEAGFKPNIFVLTSLIRCYGKVGRTDDVVRSFGMLQDLGIIPDDRFCGCLLSVAANTPAEELGKVISCIERSNVQLGAVVKLLVDRSSSESFREAARELLRSSRGVVKMPYCNCLMDLCVNLNQMEKACALLDAAQQLGIYANIQTRTQTQWSLHLRGLSVGAALTTLHVWMNDLYTSLQTGNEGLPPLLGIHTGQGKNTYSDRGLAAMFEAHLKELDAPFHEAPDKAGWFLTTNVAAKQWLESKAASELVTV</sequence>
<organism>
    <name type="scientific">Zea mays</name>
    <name type="common">Maize</name>
    <dbReference type="NCBI Taxonomy" id="4577"/>
    <lineage>
        <taxon>Eukaryota</taxon>
        <taxon>Viridiplantae</taxon>
        <taxon>Streptophyta</taxon>
        <taxon>Embryophyta</taxon>
        <taxon>Tracheophyta</taxon>
        <taxon>Spermatophyta</taxon>
        <taxon>Magnoliopsida</taxon>
        <taxon>Liliopsida</taxon>
        <taxon>Poales</taxon>
        <taxon>Poaceae</taxon>
        <taxon>PACMAD clade</taxon>
        <taxon>Panicoideae</taxon>
        <taxon>Andropogonodae</taxon>
        <taxon>Andropogoneae</taxon>
        <taxon>Tripsacinae</taxon>
        <taxon>Zea</taxon>
    </lineage>
</organism>
<proteinExistence type="evidence at transcript level"/>
<comment type="function">
    <text evidence="5 6">Involved in translation and accumulation of chloroplast ATP synthase subunits. Interacts with the 5'-UTR of the chloroplast bicistronic atpB and atpE mRNA and activates its translation by facilitating ribosome association with the mRNA (PubMed:22708543). Required for accumulation and activity of the chloroplast ATP synthase. Enhances atpA translation and is required for accumulation of specific processed atpF and psaJ transcripts (PubMed:22708543, PubMed:23735295). Required for the stabilization of bicistronic rpl16 and rpl14 mRNAs (PubMed:23735295).</text>
</comment>
<comment type="subcellular location">
    <subcellularLocation>
        <location evidence="5">Plastid</location>
        <location evidence="5">Chloroplast stroma</location>
    </subcellularLocation>
</comment>
<comment type="disruption phenotype">
    <text evidence="5">Pale green leaf phenotype.</text>
</comment>
<comment type="similarity">
    <text evidence="8">Belongs to the PPR family. P subfamily.</text>
</comment>
<accession>B4F8Z1</accession>